<comment type="function">
    <text evidence="1">Mitochondrial inner membrane calcium uniporter that mediates calcium uptake into mitochondria (By similarity). Constitutes a pore-forming and calcium-conducting subunit (By similarity). Mitochondrial calcium homeostasis plays key roles in cellular physiology and regulates cell bioenergetics, cytoplasmic calcium signals and activation of cell death pathways (By similarity).</text>
</comment>
<comment type="catalytic activity">
    <reaction evidence="1">
        <text>Ca(2+)(in) = Ca(2+)(out)</text>
        <dbReference type="Rhea" id="RHEA:29671"/>
        <dbReference type="ChEBI" id="CHEBI:29108"/>
    </reaction>
</comment>
<comment type="subcellular location">
    <subcellularLocation>
        <location evidence="1">Mitochondrion inner membrane</location>
        <topology evidence="3">Multi-pass membrane protein</topology>
    </subcellularLocation>
</comment>
<comment type="similarity">
    <text evidence="5">Belongs to the MCU (TC 1.A.77) family.</text>
</comment>
<reference key="1">
    <citation type="journal article" date="1999" name="Nature">
        <title>Sequence and analysis of chromosome 2 of the plant Arabidopsis thaliana.</title>
        <authorList>
            <person name="Lin X."/>
            <person name="Kaul S."/>
            <person name="Rounsley S.D."/>
            <person name="Shea T.P."/>
            <person name="Benito M.-I."/>
            <person name="Town C.D."/>
            <person name="Fujii C.Y."/>
            <person name="Mason T.M."/>
            <person name="Bowman C.L."/>
            <person name="Barnstead M.E."/>
            <person name="Feldblyum T.V."/>
            <person name="Buell C.R."/>
            <person name="Ketchum K.A."/>
            <person name="Lee J.J."/>
            <person name="Ronning C.M."/>
            <person name="Koo H.L."/>
            <person name="Moffat K.S."/>
            <person name="Cronin L.A."/>
            <person name="Shen M."/>
            <person name="Pai G."/>
            <person name="Van Aken S."/>
            <person name="Umayam L."/>
            <person name="Tallon L.J."/>
            <person name="Gill J.E."/>
            <person name="Adams M.D."/>
            <person name="Carrera A.J."/>
            <person name="Creasy T.H."/>
            <person name="Goodman H.M."/>
            <person name="Somerville C.R."/>
            <person name="Copenhaver G.P."/>
            <person name="Preuss D."/>
            <person name="Nierman W.C."/>
            <person name="White O."/>
            <person name="Eisen J.A."/>
            <person name="Salzberg S.L."/>
            <person name="Fraser C.M."/>
            <person name="Venter J.C."/>
        </authorList>
    </citation>
    <scope>NUCLEOTIDE SEQUENCE [LARGE SCALE GENOMIC DNA]</scope>
    <source>
        <strain>cv. Columbia</strain>
    </source>
</reference>
<reference key="2">
    <citation type="journal article" date="2017" name="Plant J.">
        <title>Araport11: a complete reannotation of the Arabidopsis thaliana reference genome.</title>
        <authorList>
            <person name="Cheng C.Y."/>
            <person name="Krishnakumar V."/>
            <person name="Chan A.P."/>
            <person name="Thibaud-Nissen F."/>
            <person name="Schobel S."/>
            <person name="Town C.D."/>
        </authorList>
    </citation>
    <scope>GENOME REANNOTATION</scope>
    <source>
        <strain>cv. Columbia</strain>
    </source>
</reference>
<reference key="3">
    <citation type="journal article" date="2002" name="Plant Physiol.">
        <title>Cloning and sequencing of cDNAs for hypothetical genes from chromosome 2 of Arabidopsis.</title>
        <authorList>
            <person name="Xiao Y.-L."/>
            <person name="Malik M."/>
            <person name="Whitelaw C.A."/>
            <person name="Town C.D."/>
        </authorList>
    </citation>
    <scope>NUCLEOTIDE SEQUENCE [LARGE SCALE MRNA]</scope>
    <source>
        <strain>cv. Columbia</strain>
    </source>
</reference>
<reference key="4">
    <citation type="journal article" date="2012" name="J. Exp. Bot.">
        <title>Plant organellar calcium signalling: an emerging field.</title>
        <authorList>
            <person name="Stael S."/>
            <person name="Wurzinger B."/>
            <person name="Mair A."/>
            <person name="Mehlmer N."/>
            <person name="Vothknecht U.C."/>
            <person name="Teige M."/>
        </authorList>
    </citation>
    <scope>GENE FAMILY</scope>
    <scope>REVIEW</scope>
</reference>
<reference key="5">
    <citation type="journal article" date="2017" name="Plant Physiol.">
        <title>Physiological Characterization of a Plant Mitochondrial Calcium Uniporter in Vitro and in Vivo.</title>
        <authorList>
            <person name="Teardo E."/>
            <person name="Carraretto L."/>
            <person name="Wagner S."/>
            <person name="Formentin E."/>
            <person name="Behera S."/>
            <person name="De Bortoli S."/>
            <person name="Larosa V."/>
            <person name="Fuchs P."/>
            <person name="Lo Schiavo F."/>
            <person name="Raffaello A."/>
            <person name="Rizzuto R."/>
            <person name="Costa A."/>
            <person name="Schwarzlaender M."/>
            <person name="Szabo I."/>
        </authorList>
    </citation>
    <scope>NOMENCLATURE</scope>
</reference>
<keyword id="KW-0106">Calcium</keyword>
<keyword id="KW-0107">Calcium channel</keyword>
<keyword id="KW-0109">Calcium transport</keyword>
<keyword id="KW-0407">Ion channel</keyword>
<keyword id="KW-0406">Ion transport</keyword>
<keyword id="KW-0472">Membrane</keyword>
<keyword id="KW-0479">Metal-binding</keyword>
<keyword id="KW-0496">Mitochondrion</keyword>
<keyword id="KW-0999">Mitochondrion inner membrane</keyword>
<keyword id="KW-1185">Reference proteome</keyword>
<keyword id="KW-0809">Transit peptide</keyword>
<keyword id="KW-0812">Transmembrane</keyword>
<keyword id="KW-1133">Transmembrane helix</keyword>
<keyword id="KW-0813">Transport</keyword>
<evidence type="ECO:0000250" key="1">
    <source>
        <dbReference type="UniProtKB" id="F4I111"/>
    </source>
</evidence>
<evidence type="ECO:0000250" key="2">
    <source>
        <dbReference type="UniProtKB" id="Q8NE86"/>
    </source>
</evidence>
<evidence type="ECO:0000255" key="3"/>
<evidence type="ECO:0000303" key="4">
    <source>
    </source>
</evidence>
<evidence type="ECO:0000305" key="5"/>
<evidence type="ECO:0000312" key="6">
    <source>
        <dbReference type="Araport" id="AT2G23790"/>
    </source>
</evidence>
<evidence type="ECO:0000312" key="7">
    <source>
        <dbReference type="EMBL" id="AAC17084.1"/>
    </source>
</evidence>
<organism>
    <name type="scientific">Arabidopsis thaliana</name>
    <name type="common">Mouse-ear cress</name>
    <dbReference type="NCBI Taxonomy" id="3702"/>
    <lineage>
        <taxon>Eukaryota</taxon>
        <taxon>Viridiplantae</taxon>
        <taxon>Streptophyta</taxon>
        <taxon>Embryophyta</taxon>
        <taxon>Tracheophyta</taxon>
        <taxon>Spermatophyta</taxon>
        <taxon>Magnoliopsida</taxon>
        <taxon>eudicotyledons</taxon>
        <taxon>Gunneridae</taxon>
        <taxon>Pentapetalae</taxon>
        <taxon>rosids</taxon>
        <taxon>malvids</taxon>
        <taxon>Brassicales</taxon>
        <taxon>Brassicaceae</taxon>
        <taxon>Camelineae</taxon>
        <taxon>Arabidopsis</taxon>
    </lineage>
</organism>
<feature type="transit peptide" description="Mitochondrion" evidence="3">
    <location>
        <begin position="1"/>
        <end position="69"/>
    </location>
</feature>
<feature type="chain" id="PRO_0000431371" description="Calcium uniporter protein 3, mitochondrial">
    <location>
        <begin position="70"/>
        <end position="336"/>
    </location>
</feature>
<feature type="transmembrane region" description="Helical; Name=1" evidence="3">
    <location>
        <begin position="231"/>
        <end position="251"/>
    </location>
</feature>
<feature type="transmembrane region" description="Helical; Name=2" evidence="3">
    <location>
        <begin position="257"/>
        <end position="277"/>
    </location>
</feature>
<feature type="short sequence motif" description="Selectivity filter" evidence="2">
    <location>
        <begin position="255"/>
        <end position="263"/>
    </location>
</feature>
<feature type="binding site" evidence="2">
    <location>
        <position position="259"/>
    </location>
    <ligand>
        <name>Ca(2+)</name>
        <dbReference type="ChEBI" id="CHEBI:29108"/>
    </ligand>
</feature>
<accession>O64823</accession>
<accession>Q8H1L7</accession>
<proteinExistence type="evidence at transcript level"/>
<dbReference type="EMBL" id="AC004482">
    <property type="protein sequence ID" value="AAC17084.1"/>
    <property type="molecule type" value="Genomic_DNA"/>
</dbReference>
<dbReference type="EMBL" id="CP002685">
    <property type="protein sequence ID" value="AEC07491.1"/>
    <property type="molecule type" value="Genomic_DNA"/>
</dbReference>
<dbReference type="EMBL" id="AY145900">
    <property type="protein sequence ID" value="AAN59955.1"/>
    <property type="molecule type" value="mRNA"/>
</dbReference>
<dbReference type="PIR" id="A84629">
    <property type="entry name" value="A84629"/>
</dbReference>
<dbReference type="RefSeq" id="NP_179959.1">
    <property type="nucleotide sequence ID" value="NM_127942.3"/>
</dbReference>
<dbReference type="SMR" id="O64823"/>
<dbReference type="BioGRID" id="2263">
    <property type="interactions" value="4"/>
</dbReference>
<dbReference type="FunCoup" id="O64823">
    <property type="interactions" value="515"/>
</dbReference>
<dbReference type="IntAct" id="O64823">
    <property type="interactions" value="4"/>
</dbReference>
<dbReference type="STRING" id="3702.O64823"/>
<dbReference type="PaxDb" id="3702-AT2G23790.1"/>
<dbReference type="EnsemblPlants" id="AT2G23790.1">
    <property type="protein sequence ID" value="AT2G23790.1"/>
    <property type="gene ID" value="AT2G23790"/>
</dbReference>
<dbReference type="GeneID" id="816911"/>
<dbReference type="Gramene" id="AT2G23790.1">
    <property type="protein sequence ID" value="AT2G23790.1"/>
    <property type="gene ID" value="AT2G23790"/>
</dbReference>
<dbReference type="KEGG" id="ath:AT2G23790"/>
<dbReference type="Araport" id="AT2G23790"/>
<dbReference type="TAIR" id="AT2G23790"/>
<dbReference type="eggNOG" id="KOG2966">
    <property type="taxonomic scope" value="Eukaryota"/>
</dbReference>
<dbReference type="HOGENOM" id="CLU_066330_0_0_1"/>
<dbReference type="InParanoid" id="O64823"/>
<dbReference type="OMA" id="EIMQMPV"/>
<dbReference type="PhylomeDB" id="O64823"/>
<dbReference type="PRO" id="PR:O64823"/>
<dbReference type="Proteomes" id="UP000006548">
    <property type="component" value="Chromosome 2"/>
</dbReference>
<dbReference type="ExpressionAtlas" id="O64823">
    <property type="expression patterns" value="baseline and differential"/>
</dbReference>
<dbReference type="GO" id="GO:0005743">
    <property type="term" value="C:mitochondrial inner membrane"/>
    <property type="evidence" value="ECO:0007669"/>
    <property type="project" value="UniProtKB-SubCell"/>
</dbReference>
<dbReference type="GO" id="GO:0005262">
    <property type="term" value="F:calcium channel activity"/>
    <property type="evidence" value="ECO:0007669"/>
    <property type="project" value="UniProtKB-KW"/>
</dbReference>
<dbReference type="GO" id="GO:0046872">
    <property type="term" value="F:metal ion binding"/>
    <property type="evidence" value="ECO:0007669"/>
    <property type="project" value="UniProtKB-KW"/>
</dbReference>
<dbReference type="GO" id="GO:0051560">
    <property type="term" value="P:mitochondrial calcium ion homeostasis"/>
    <property type="evidence" value="ECO:0007669"/>
    <property type="project" value="InterPro"/>
</dbReference>
<dbReference type="InterPro" id="IPR006769">
    <property type="entry name" value="MCU_C"/>
</dbReference>
<dbReference type="InterPro" id="IPR039055">
    <property type="entry name" value="MCU_fam"/>
</dbReference>
<dbReference type="PANTHER" id="PTHR13462:SF34">
    <property type="entry name" value="CALCIUM UNIPORTER PROTEIN 2, MITOCHONDRIAL"/>
    <property type="match status" value="1"/>
</dbReference>
<dbReference type="PANTHER" id="PTHR13462">
    <property type="entry name" value="CALCIUM UNIPORTER PROTEIN, MITOCHONDRIAL"/>
    <property type="match status" value="1"/>
</dbReference>
<dbReference type="Pfam" id="PF04678">
    <property type="entry name" value="MCU"/>
    <property type="match status" value="1"/>
</dbReference>
<name>MCU3_ARATH</name>
<sequence length="336" mass="38177">MAMRKLLSKKLFNITNVASQSLMNCRISSSSLAVRTRVPNDSTDTTKIAPEPGDLAMSRRFMHNSAMIRPAEIMQMPVGESLIEKLREIDGSKDRIRLDGLSPPERETSLTVADTKKLLRAAQIEIVKSKLRETGRSWMPYKEFVSVCGEASSDPDLGSKIAKMLDDSANVIVLGDSVCIRPDQVTKSIEGLLPLPKIHNPNDPRRIEFKELEAEKAVIDVKAHTLVRKELWAGLGYLILQTAGFMRLTFWELSWDVMEPICFYVTSVYFMAGYAFFLRTSKEPSFEGFYQSRFEAKQRKLMNEYEFDLERYNELKKLFCSKPSDHVSKILGAIKS</sequence>
<gene>
    <name evidence="4" type="primary">MCU3</name>
    <name evidence="6" type="ordered locus">At2g23790</name>
    <name evidence="7" type="ORF">F27L4.3</name>
</gene>
<protein>
    <recommendedName>
        <fullName>Calcium uniporter protein 3, mitochondrial</fullName>
        <shortName evidence="4">AtMCU3</shortName>
    </recommendedName>
</protein>